<name>AROG_CANAL</name>
<accession>P79023</accession>
<accession>A0A1D8PDG6</accession>
<accession>Q59LX7</accession>
<proteinExistence type="inferred from homology"/>
<dbReference type="EC" id="2.5.1.54"/>
<dbReference type="EMBL" id="U53216">
    <property type="protein sequence ID" value="AAB48240.1"/>
    <property type="molecule type" value="Genomic_DNA"/>
</dbReference>
<dbReference type="EMBL" id="CP017623">
    <property type="protein sequence ID" value="AOW26182.1"/>
    <property type="molecule type" value="Genomic_DNA"/>
</dbReference>
<dbReference type="PIR" id="S68093">
    <property type="entry name" value="S68093"/>
</dbReference>
<dbReference type="RefSeq" id="XP_710729.1">
    <property type="nucleotide sequence ID" value="XM_705637.2"/>
</dbReference>
<dbReference type="SMR" id="P79023"/>
<dbReference type="FunCoup" id="P79023">
    <property type="interactions" value="241"/>
</dbReference>
<dbReference type="STRING" id="237561.P79023"/>
<dbReference type="EnsemblFungi" id="C1_05110C_A-T">
    <property type="protein sequence ID" value="C1_05110C_A-T-p1"/>
    <property type="gene ID" value="C1_05110C_A"/>
</dbReference>
<dbReference type="GeneID" id="3647668"/>
<dbReference type="KEGG" id="cal:CAALFM_C105110CA"/>
<dbReference type="CGD" id="CAL0000182853">
    <property type="gene designation" value="ARO4"/>
</dbReference>
<dbReference type="VEuPathDB" id="FungiDB:C1_05110C_A"/>
<dbReference type="eggNOG" id="ENOG502QPSU">
    <property type="taxonomic scope" value="Eukaryota"/>
</dbReference>
<dbReference type="HOGENOM" id="CLU_030903_0_1_1"/>
<dbReference type="InParanoid" id="P79023"/>
<dbReference type="OMA" id="QPLVMEN"/>
<dbReference type="OrthoDB" id="4699125at2759"/>
<dbReference type="UniPathway" id="UPA00053">
    <property type="reaction ID" value="UER00084"/>
</dbReference>
<dbReference type="PRO" id="PR:P79023"/>
<dbReference type="Proteomes" id="UP000000559">
    <property type="component" value="Chromosome 1"/>
</dbReference>
<dbReference type="GO" id="GO:0005737">
    <property type="term" value="C:cytoplasm"/>
    <property type="evidence" value="ECO:0000318"/>
    <property type="project" value="GO_Central"/>
</dbReference>
<dbReference type="GO" id="GO:0003849">
    <property type="term" value="F:3-deoxy-7-phosphoheptulonate synthase activity"/>
    <property type="evidence" value="ECO:0000316"/>
    <property type="project" value="CGD"/>
</dbReference>
<dbReference type="GO" id="GO:0008652">
    <property type="term" value="P:amino acid biosynthetic process"/>
    <property type="evidence" value="ECO:0007669"/>
    <property type="project" value="UniProtKB-KW"/>
</dbReference>
<dbReference type="GO" id="GO:0009073">
    <property type="term" value="P:aromatic amino acid family biosynthetic process"/>
    <property type="evidence" value="ECO:0000318"/>
    <property type="project" value="GO_Central"/>
</dbReference>
<dbReference type="GO" id="GO:0009423">
    <property type="term" value="P:chorismate biosynthetic process"/>
    <property type="evidence" value="ECO:0007669"/>
    <property type="project" value="UniProtKB-UniPathway"/>
</dbReference>
<dbReference type="FunFam" id="3.20.20.70:FF:000005">
    <property type="entry name" value="Phospho-2-dehydro-3-deoxyheptonate aldolase"/>
    <property type="match status" value="1"/>
</dbReference>
<dbReference type="Gene3D" id="3.20.20.70">
    <property type="entry name" value="Aldolase class I"/>
    <property type="match status" value="1"/>
</dbReference>
<dbReference type="InterPro" id="IPR013785">
    <property type="entry name" value="Aldolase_TIM"/>
</dbReference>
<dbReference type="InterPro" id="IPR006218">
    <property type="entry name" value="DAHP1/KDSA"/>
</dbReference>
<dbReference type="InterPro" id="IPR006219">
    <property type="entry name" value="DAHP_synth_1"/>
</dbReference>
<dbReference type="NCBIfam" id="TIGR00034">
    <property type="entry name" value="aroFGH"/>
    <property type="match status" value="1"/>
</dbReference>
<dbReference type="NCBIfam" id="NF009395">
    <property type="entry name" value="PRK12755.1"/>
    <property type="match status" value="1"/>
</dbReference>
<dbReference type="PANTHER" id="PTHR21225">
    <property type="entry name" value="PHOSPHO-2-DEHYDRO-3-DEOXYHEPTONATE ALDOLASE DAHP SYNTHETASE"/>
    <property type="match status" value="1"/>
</dbReference>
<dbReference type="PANTHER" id="PTHR21225:SF12">
    <property type="entry name" value="PHOSPHO-2-DEHYDRO-3-DEOXYHEPTONATE ALDOLASE, TYROSINE-INHIBITED"/>
    <property type="match status" value="1"/>
</dbReference>
<dbReference type="Pfam" id="PF00793">
    <property type="entry name" value="DAHP_synth_1"/>
    <property type="match status" value="1"/>
</dbReference>
<dbReference type="PIRSF" id="PIRSF001361">
    <property type="entry name" value="DAHP_synthase"/>
    <property type="match status" value="1"/>
</dbReference>
<dbReference type="SUPFAM" id="SSF51569">
    <property type="entry name" value="Aldolase"/>
    <property type="match status" value="1"/>
</dbReference>
<organism>
    <name type="scientific">Candida albicans (strain SC5314 / ATCC MYA-2876)</name>
    <name type="common">Yeast</name>
    <dbReference type="NCBI Taxonomy" id="237561"/>
    <lineage>
        <taxon>Eukaryota</taxon>
        <taxon>Fungi</taxon>
        <taxon>Dikarya</taxon>
        <taxon>Ascomycota</taxon>
        <taxon>Saccharomycotina</taxon>
        <taxon>Pichiomycetes</taxon>
        <taxon>Debaryomycetaceae</taxon>
        <taxon>Candida/Lodderomyces clade</taxon>
        <taxon>Candida</taxon>
    </lineage>
</organism>
<gene>
    <name type="primary">ARO4</name>
    <name type="ordered locus">CAALFM_C105110CA</name>
    <name type="ORF">CaO19.11542</name>
    <name type="ORF">CaO19.4060</name>
</gene>
<sequence length="370" mass="40291">MSKTPVPTEYDDTRILGYDPLVPPALLQHEIKASAESLDVVIKGRYDSAQILKGNDDRCIVIVGPCSIHDPPQALEYGKRLKKLADELKDDLVIIMRAYLEKPRTTVGWKGLINDPDVDNSFDINRGLKISRQLYSDLTSVVGLPIGSEMLDTISPQYFSDFLSFGAIGARTTESQLHRELASGLSFPIGFKNGTDGGLAVALDAVQASSKGHHFMGVTKNGMAAITTTKGNDCCFIILRGGKKITNYDVESVKAAKEAIAKCTDPSIKLMVDCSHDNSRKDYRNQPQVLDSVAEQISNGEDSIIGVMIESNIHEGKQPMPPAGSGKEALKYGVSITDGCVSWETTVEMLTKLSQAVQTRRSLKKQKVSN</sequence>
<keyword id="KW-0028">Amino-acid biosynthesis</keyword>
<keyword id="KW-0057">Aromatic amino acid biosynthesis</keyword>
<keyword id="KW-1185">Reference proteome</keyword>
<keyword id="KW-0808">Transferase</keyword>
<protein>
    <recommendedName>
        <fullName>Phospho-2-dehydro-3-deoxyheptonate aldolase, tyrosine-inhibited</fullName>
        <ecNumber>2.5.1.54</ecNumber>
    </recommendedName>
    <alternativeName>
        <fullName>3-deoxy-D-arabino-heptulosonate 7-phosphate synthase</fullName>
    </alternativeName>
    <alternativeName>
        <fullName>DAHP synthase</fullName>
    </alternativeName>
    <alternativeName>
        <fullName>Phospho-2-keto-3-deoxyheptonate aldolase</fullName>
    </alternativeName>
</protein>
<feature type="chain" id="PRO_0000140850" description="Phospho-2-dehydro-3-deoxyheptonate aldolase, tyrosine-inhibited">
    <location>
        <begin position="1"/>
        <end position="370"/>
    </location>
</feature>
<reference key="1">
    <citation type="submission" date="1996-04" db="EMBL/GenBank/DDBJ databases">
        <authorList>
            <person name="Sousa S."/>
            <person name="Pereira S.A."/>
            <person name="Livi G.P."/>
        </authorList>
    </citation>
    <scope>NUCLEOTIDE SEQUENCE [GENOMIC DNA]</scope>
    <source>
        <strain>ATCC 11651 / B792 / 171D</strain>
    </source>
</reference>
<reference key="2">
    <citation type="journal article" date="2004" name="Proc. Natl. Acad. Sci. U.S.A.">
        <title>The diploid genome sequence of Candida albicans.</title>
        <authorList>
            <person name="Jones T."/>
            <person name="Federspiel N.A."/>
            <person name="Chibana H."/>
            <person name="Dungan J."/>
            <person name="Kalman S."/>
            <person name="Magee B.B."/>
            <person name="Newport G."/>
            <person name="Thorstenson Y.R."/>
            <person name="Agabian N."/>
            <person name="Magee P.T."/>
            <person name="Davis R.W."/>
            <person name="Scherer S."/>
        </authorList>
    </citation>
    <scope>NUCLEOTIDE SEQUENCE [LARGE SCALE GENOMIC DNA]</scope>
    <source>
        <strain>SC5314 / ATCC MYA-2876</strain>
    </source>
</reference>
<reference key="3">
    <citation type="journal article" date="2007" name="Genome Biol.">
        <title>Assembly of the Candida albicans genome into sixteen supercontigs aligned on the eight chromosomes.</title>
        <authorList>
            <person name="van het Hoog M."/>
            <person name="Rast T.J."/>
            <person name="Martchenko M."/>
            <person name="Grindle S."/>
            <person name="Dignard D."/>
            <person name="Hogues H."/>
            <person name="Cuomo C."/>
            <person name="Berriman M."/>
            <person name="Scherer S."/>
            <person name="Magee B.B."/>
            <person name="Whiteway M."/>
            <person name="Chibana H."/>
            <person name="Nantel A."/>
            <person name="Magee P.T."/>
        </authorList>
    </citation>
    <scope>GENOME REANNOTATION</scope>
    <source>
        <strain>SC5314 / ATCC MYA-2876</strain>
    </source>
</reference>
<reference key="4">
    <citation type="journal article" date="2013" name="Genome Biol.">
        <title>Assembly of a phased diploid Candida albicans genome facilitates allele-specific measurements and provides a simple model for repeat and indel structure.</title>
        <authorList>
            <person name="Muzzey D."/>
            <person name="Schwartz K."/>
            <person name="Weissman J.S."/>
            <person name="Sherlock G."/>
        </authorList>
    </citation>
    <scope>NUCLEOTIDE SEQUENCE [LARGE SCALE GENOMIC DNA]</scope>
    <scope>GENOME REANNOTATION</scope>
    <source>
        <strain>SC5314 / ATCC MYA-2876</strain>
    </source>
</reference>
<reference key="5">
    <citation type="journal article" date="1996" name="Curr. Genet.">
        <title>Aromatic amino-acid biosynthesis in Candida albicans: identification of the ARO4 gene encoding a second DAHP synthase.</title>
        <authorList>
            <person name="Pereira S.A."/>
            <person name="Livi G.P."/>
        </authorList>
    </citation>
    <scope>PARTIAL NUCLEOTIDE SEQUENCE</scope>
</reference>
<comment type="function">
    <text>Stereospecific condensation of phosphoenolpyruvate (PEP) and D-erythrose-4-phosphate (E4P) giving rise to 3-deoxy-D-arabino-heptulosonate-7-phosphate (DAHP).</text>
</comment>
<comment type="catalytic activity">
    <reaction>
        <text>D-erythrose 4-phosphate + phosphoenolpyruvate + H2O = 7-phospho-2-dehydro-3-deoxy-D-arabino-heptonate + phosphate</text>
        <dbReference type="Rhea" id="RHEA:14717"/>
        <dbReference type="ChEBI" id="CHEBI:15377"/>
        <dbReference type="ChEBI" id="CHEBI:16897"/>
        <dbReference type="ChEBI" id="CHEBI:43474"/>
        <dbReference type="ChEBI" id="CHEBI:58394"/>
        <dbReference type="ChEBI" id="CHEBI:58702"/>
        <dbReference type="EC" id="2.5.1.54"/>
    </reaction>
</comment>
<comment type="activity regulation">
    <text evidence="1">Inhibited by tyrosine.</text>
</comment>
<comment type="pathway">
    <text>Metabolic intermediate biosynthesis; chorismate biosynthesis; chorismate from D-erythrose 4-phosphate and phosphoenolpyruvate: step 1/7.</text>
</comment>
<comment type="similarity">
    <text evidence="2">Belongs to the class-I DAHP synthase family.</text>
</comment>
<evidence type="ECO:0000250" key="1"/>
<evidence type="ECO:0000305" key="2"/>